<evidence type="ECO:0000250" key="1"/>
<evidence type="ECO:0000250" key="2">
    <source>
        <dbReference type="UniProtKB" id="P68431"/>
    </source>
</evidence>
<evidence type="ECO:0000250" key="3">
    <source>
        <dbReference type="UniProtKB" id="P68432"/>
    </source>
</evidence>
<evidence type="ECO:0000250" key="4">
    <source>
        <dbReference type="UniProtKB" id="P68433"/>
    </source>
</evidence>
<evidence type="ECO:0000250" key="5">
    <source>
        <dbReference type="UniProtKB" id="P84243"/>
    </source>
</evidence>
<evidence type="ECO:0000250" key="6">
    <source>
        <dbReference type="UniProtKB" id="Q71DI3"/>
    </source>
</evidence>
<evidence type="ECO:0000256" key="7">
    <source>
        <dbReference type="SAM" id="MobiDB-lite"/>
    </source>
</evidence>
<evidence type="ECO:0000269" key="8">
    <source>
    </source>
</evidence>
<evidence type="ECO:0000269" key="9">
    <source>
    </source>
</evidence>
<evidence type="ECO:0000269" key="10">
    <source>
    </source>
</evidence>
<evidence type="ECO:0000305" key="11"/>
<comment type="function">
    <text>Core component of nucleosome. Nucleosomes wrap and compact DNA into chromatin, limiting DNA accessibility to the cellular machineries which require DNA as a template. Histones thereby play a central role in transcription regulation, DNA repair, DNA replication and chromosomal stability. DNA accessibility is regulated via a complex set of post-translational modifications of histones, also called histone code, and nucleosome remodeling.</text>
</comment>
<comment type="subunit">
    <text evidence="2">The nucleosome is a histone octamer containing two molecules each of H2A, H2B, H3 and H4 assembled in one H3-H4 heterotetramer and two H2A-H2B heterodimers. The octamer wraps approximately 147 bp of DNA. Interacts with TONSL; CHAF1A; CHAF1B; MCM2 and DNAJC9 (By similarity). Interacts wth NASP; NASP is a histone chaperone that stabilizes and maintains a soluble pool of Histone H3-H4 dimers (By similarity).</text>
</comment>
<comment type="subcellular location">
    <subcellularLocation>
        <location>Nucleus</location>
    </subcellularLocation>
    <subcellularLocation>
        <location>Chromosome</location>
    </subcellularLocation>
</comment>
<comment type="developmental stage">
    <text>Expressed during S phase, then expression strongly decreases as cell division slows down during the process of differentiation.</text>
</comment>
<comment type="PTM">
    <text evidence="2">Acetylation is generally linked to gene activation. Acetylation on Lys-10 (H3K9ac) impairs methylation at Arg-9 (H3R8me2s). Acetylation on Lys-19 (H3K18ac) and Lys-24 (H3K24ac) favors methylation at Arg-18 (H3R17me). Acetylation at Lys-123 (H3K122ac) by EP300/p300 plays a central role in chromatin structure: localizes at the surface of the histone octamer and stimulates transcription, possibly by promoting nucleosome instability.</text>
</comment>
<comment type="PTM">
    <text evidence="2">Citrullination at Arg-9 (H3R8ci) and/or Arg-18 (H3R17ci) by PADI4 impairs methylation and represses transcription.</text>
</comment>
<comment type="PTM">
    <text evidence="2">Asymmetric dimethylation at Arg-18 (H3R17me2a) by CARM1 is linked to gene activation. Symmetric dimethylation at Arg-9 (H3R8me2s) by PRMT5 is linked to gene repression. Asymmetric dimethylation at Arg-3 (H3R2me2a) by PRMT6 is linked to gene repression and is mutually exclusive with H3 Lys-5 methylation (H3K4me2 and H3K4me3). H3R2me2a is present at the 3' of genes regardless of their transcription state and is enriched on inactive promoters, while it is absent on active promoters.</text>
</comment>
<comment type="PTM">
    <text evidence="2">Methylation at Lys-5 (H3K4me), Lys-37 (H3K36me) and Lys-80 (H3K79me) are linked to gene activation. Methylation at Lys-5 (H3K4me) facilitates subsequent acetylation of H3 and H4. Methylation at Lys-80 (H3K79me) is associated with DNA double-strand break (DSB) responses and is a specific target for TP53BP1. Methylation at Lys-10 (H3K9me) and Lys-28 (H3K27me) are linked to gene repression. Methylation at Lys-10 (H3K9me) is a specific target for HP1 proteins (CBX1, CBX3 and CBX5) and prevents subsequent phosphorylation at Ser-11 (H3S10ph) and acetylation of H3 and H4. Methylation at Lys-5 (H3K4me) and Lys-80 (H3K79me) require preliminary monoubiquitination of H2B at 'Lys-120'. Methylation at Lys-10 (H3K9me) and Lys-28 (H3K27me) are enriched in inactive X chromosome chromatin. Monomethylation at Lys-57 (H3K56me1) by EHMT2/G9A in G1 phase promotes interaction with PCNA and is required for DNA replication.</text>
</comment>
<comment type="PTM">
    <text evidence="2">Phosphorylated at Thr-4 (H3T3ph) by VRK1. Phosphorylated at Thr-4 (H3T3ph) by HASPIN during prophase and dephosphorylated during anaphase. Phosphorylation at Ser-11 (H3S10ph) by AURKB is crucial for chromosome condensation and cell-cycle progression during mitosis and meiosis. In addition phosphorylation at Ser-11 (H3S10ph) by RPS6KA4 and RPS6KA5 is important during interphase because it enables the transcription of genes following external stimulation, like mitogens, stress, growth factors or UV irradiation and result in the activation of genes, such as c-fos and c-jun. Phosphorylation at Ser-11 (H3S10ph), which is linked to gene activation, prevents methylation at Lys-10 (H3K9me) but facilitates acetylation of H3 and H4. Phosphorylation at Ser-11 (H3S10ph) by AURKB mediates the dissociation of HP1 proteins (CBX1, CBX3 and CBX5) from heterochromatin. Phosphorylation at Ser-11 (H3S10ph) is also an essential regulatory mechanism for neoplastic cell transformation. Phosphorylated at Ser-29 (H3S28ph) by MAP3K20 isoform 1, RPS6KA5 or AURKB during mitosis or upon ultraviolet B irradiation. Phosphorylation at Thr-7 (H3T6ph) by PRKCB is a specific tag for epigenetic transcriptional activation that prevents demethylation of Lys-5 (H3K4me) by LSD1/KDM1A. At centromeres, specifically phosphorylated at Thr-12 (H3T11ph) from prophase to early anaphase, by DAPK3 and PKN1. Phosphorylation at Thr-12 (H3T11ph) by PKN1 or isoform M2 of PKM (PKM2) is a specific tag for epigenetic transcriptional activation that promotes demethylation of Lys-10 (H3K9me) by KDM4C/JMJD2C. Phosphorylation at Thr-12 (H3T11ph) by chromatin-associated CHEK1 regulates the transcription of cell cycle regulatory genes by modulating acetylation of Lys-10 (H3K9ac). Phosphorylation at Tyr-42 (H3Y41ph) by JAK2 promotes exclusion of CBX5 (HP1 alpha) from chromatin.</text>
</comment>
<comment type="PTM">
    <text evidence="1 10">Ubiquitinated by the CUL4-DDB-RBX1 complex in response to ultraviolet irradiation. This may weaken the interaction between histones and DNA and facilitate DNA accessibility to repair proteins. Monoubiquitinated by RAG1 in lymphoid cells, monoubiquitination is required for V(D)J recombination (By similarity). Ubiquitinated in testes.</text>
</comment>
<comment type="PTM">
    <text evidence="2">Lysine deamination at Lys-5 (H3K4all) to form allysine is mediated by LOXL2. Allysine formation by LOXL2 only takes place on H3K4me3 and results in gene repression.</text>
</comment>
<comment type="PTM">
    <text evidence="2">Crotonylation (Kcr) is specifically present in male germ cells and marks testis-specific genes in post-meiotic cells, including X-linked genes that escape sex chromosome inactivation in haploid cells. Crotonylation marks active promoters and enhancers and confers resistance to transcriptional repressors. It is also associated with post-meiotically activated genes on autosomes.</text>
</comment>
<comment type="PTM">
    <text evidence="4">Butyrylation of histones marks active promoters and competes with histone acetylation. It is present during late spermatogenesis.</text>
</comment>
<comment type="PTM">
    <text evidence="2">Succinylation at Lys-80 (H3K79succ) by KAT2A takes place with a maximum frequency around the transcription start sites of genes. It gives a specific tag for epigenetic transcription activation. Desuccinylation at Lys-123 (H3K122succ) by SIRT7 in response to DNA damage promotes chromatin condensation and double-strand breaks (DSBs) repair.</text>
</comment>
<comment type="PTM">
    <text evidence="2">Serine ADP-ribosylation by PARP1 or PARP2 constitutes the primary form of ADP-ribosylation of proteins in response to DNA damage. Serine ADP-ribosylation at Ser-11 (H3S10ADPr) promotes recruitment of CHD1L. H3S10ADPr is mutually exclusive with phosphorylation at Ser-11 (H3S10ph) and impairs acetylation at Lys-10 (H3K9ac).</text>
</comment>
<comment type="PTM">
    <text evidence="2">Serotonylated by TGM2 at Gln-6 (H3Q5ser) during serotonergic neuron differentiation (By similarity). H3Q5ser is associated with trimethylation of Lys-5 (H3K4me3) and enhances general transcription factor IID (TFIID) complex-binding to H3K4me3, thereby facilitating transcription (By similarity).</text>
</comment>
<comment type="PTM">
    <text evidence="9">Dopaminylated by TGM2 at Gln-6 (H3Q5dop) in ventral tegmental area (VTA) neurons (PubMed:32273471). H3Q5dop mediates neurotransmission-independent role of nuclear dopamine by regulating relapse-related transcriptional plasticity in the reward system (PubMed:32273471).</text>
</comment>
<comment type="PTM">
    <text evidence="2">Lactylated in macrophages by EP300/P300 by using lactoyl-CoA directly derived from endogenous or exogenous lactate, leading to stimulates gene transcription.</text>
</comment>
<comment type="miscellaneous">
    <text>This histone is only present in mammals.</text>
</comment>
<comment type="similarity">
    <text evidence="11">Belongs to the histone H3 family.</text>
</comment>
<keyword id="KW-0007">Acetylation</keyword>
<keyword id="KW-0013">ADP-ribosylation</keyword>
<keyword id="KW-0158">Chromosome</keyword>
<keyword id="KW-0164">Citrullination</keyword>
<keyword id="KW-0903">Direct protein sequencing</keyword>
<keyword id="KW-0238">DNA-binding</keyword>
<keyword id="KW-0379">Hydroxylation</keyword>
<keyword id="KW-0449">Lipoprotein</keyword>
<keyword id="KW-0488">Methylation</keyword>
<keyword id="KW-0544">Nucleosome core</keyword>
<keyword id="KW-0539">Nucleus</keyword>
<keyword id="KW-0597">Phosphoprotein</keyword>
<keyword id="KW-1185">Reference proteome</keyword>
<keyword id="KW-0832">Ubl conjugation</keyword>
<sequence>MARTKQTARKSTGGKAPRKQLATKAARKSAPATGGVKKPHRYRPGTVALREIRRYQKSTELLIRKLPFQRLVREIAQDFKTDLRFQSSAVMALQEACEAYLVGLFEDTNLCAIHAKRVTIMPKDIQLARRIRGERA</sequence>
<organism>
    <name type="scientific">Rattus norvegicus</name>
    <name type="common">Rat</name>
    <dbReference type="NCBI Taxonomy" id="10116"/>
    <lineage>
        <taxon>Eukaryota</taxon>
        <taxon>Metazoa</taxon>
        <taxon>Chordata</taxon>
        <taxon>Craniata</taxon>
        <taxon>Vertebrata</taxon>
        <taxon>Euteleostomi</taxon>
        <taxon>Mammalia</taxon>
        <taxon>Eutheria</taxon>
        <taxon>Euarchontoglires</taxon>
        <taxon>Glires</taxon>
        <taxon>Rodentia</taxon>
        <taxon>Myomorpha</taxon>
        <taxon>Muroidea</taxon>
        <taxon>Muridae</taxon>
        <taxon>Murinae</taxon>
        <taxon>Rattus</taxon>
    </lineage>
</organism>
<protein>
    <recommendedName>
        <fullName>Histone H3.1</fullName>
    </recommendedName>
</protein>
<dbReference type="EMBL" id="L19706">
    <property type="protein sequence ID" value="AAA19824.1"/>
    <property type="molecule type" value="Genomic_DNA"/>
</dbReference>
<dbReference type="RefSeq" id="NP_001013074.1">
    <property type="nucleotide sequence ID" value="NM_001013056.2"/>
</dbReference>
<dbReference type="RefSeq" id="NP_001395691.1">
    <property type="nucleotide sequence ID" value="NM_001408762.1"/>
</dbReference>
<dbReference type="RefSeq" id="NP_001395694.1">
    <property type="nucleotide sequence ID" value="NM_001408765.1"/>
</dbReference>
<dbReference type="RefSeq" id="XP_017443213.1">
    <property type="nucleotide sequence ID" value="XM_017587724.1"/>
</dbReference>
<dbReference type="RefSeq" id="XP_017443230.1">
    <property type="nucleotide sequence ID" value="XM_017587741.1"/>
</dbReference>
<dbReference type="RefSeq" id="XP_017456209.1">
    <property type="nucleotide sequence ID" value="XM_017600720.1"/>
</dbReference>
<dbReference type="SMR" id="Q6LED0"/>
<dbReference type="FunCoup" id="Q6LED0">
    <property type="interactions" value="1050"/>
</dbReference>
<dbReference type="IntAct" id="Q6LED0">
    <property type="interactions" value="2"/>
</dbReference>
<dbReference type="STRING" id="10116.ENSRNOP00000064431"/>
<dbReference type="iPTMnet" id="Q6LED0"/>
<dbReference type="PhosphoSitePlus" id="Q6LED0"/>
<dbReference type="jPOST" id="Q6LED0"/>
<dbReference type="PaxDb" id="10116-ENSRNOP00000064431"/>
<dbReference type="ABCD" id="Q6LED0">
    <property type="antibodies" value="2 sequenced antibodies"/>
</dbReference>
<dbReference type="Ensembl" id="ENSRNOT00000094137.1">
    <property type="protein sequence ID" value="ENSRNOP00000080297.1"/>
    <property type="gene ID" value="ENSRNOG00000068614.1"/>
</dbReference>
<dbReference type="Ensembl" id="ENSRNOT00000095973.1">
    <property type="protein sequence ID" value="ENSRNOP00000096532.1"/>
    <property type="gene ID" value="ENSRNOG00000064755.1"/>
</dbReference>
<dbReference type="Ensembl" id="ENSRNOT00000101837.1">
    <property type="protein sequence ID" value="ENSRNOP00000091493.1"/>
    <property type="gene ID" value="ENSRNOG00000068516.1"/>
</dbReference>
<dbReference type="Ensembl" id="ENSRNOT00000117255.1">
    <property type="protein sequence ID" value="ENSRNOP00000095460.1"/>
    <property type="gene ID" value="ENSRNOG00000063167.1"/>
</dbReference>
<dbReference type="GeneID" id="291159"/>
<dbReference type="GeneID" id="679994"/>
<dbReference type="GeneID" id="680498"/>
<dbReference type="KEGG" id="rno:291159"/>
<dbReference type="AGR" id="RGD:1311554"/>
<dbReference type="AGR" id="RGD:1591702"/>
<dbReference type="AGR" id="RGD:1598076"/>
<dbReference type="CTD" id="291159"/>
<dbReference type="eggNOG" id="KOG1745">
    <property type="taxonomic scope" value="Eukaryota"/>
</dbReference>
<dbReference type="GeneTree" id="ENSGT01130000278271"/>
<dbReference type="HOGENOM" id="CLU_078295_4_0_1"/>
<dbReference type="InParanoid" id="Q6LED0"/>
<dbReference type="OMA" id="FTNEMAR"/>
<dbReference type="OrthoDB" id="9609993at2759"/>
<dbReference type="PhylomeDB" id="Q6LED0"/>
<dbReference type="TreeFam" id="TF314241"/>
<dbReference type="Reactome" id="R-RNO-1266695">
    <property type="pathway name" value="Interleukin-7 signaling"/>
</dbReference>
<dbReference type="Reactome" id="R-RNO-212300">
    <property type="pathway name" value="PRC2 methylates histones and DNA"/>
</dbReference>
<dbReference type="Reactome" id="R-RNO-2559580">
    <property type="pathway name" value="Oxidative Stress Induced Senescence"/>
</dbReference>
<dbReference type="Reactome" id="R-RNO-2559582">
    <property type="pathway name" value="Senescence-Associated Secretory Phenotype (SASP)"/>
</dbReference>
<dbReference type="Reactome" id="R-RNO-3214841">
    <property type="pathway name" value="PKMTs methylate histone lysines"/>
</dbReference>
<dbReference type="Reactome" id="R-RNO-3214842">
    <property type="pathway name" value="HDMs demethylate histones"/>
</dbReference>
<dbReference type="Reactome" id="R-RNO-3214847">
    <property type="pathway name" value="HATs acetylate histones"/>
</dbReference>
<dbReference type="Reactome" id="R-RNO-3214858">
    <property type="pathway name" value="RMTs methylate histone arginines"/>
</dbReference>
<dbReference type="Reactome" id="R-RNO-3247509">
    <property type="pathway name" value="Chromatin modifying enzymes"/>
</dbReference>
<dbReference type="Reactome" id="R-RNO-427359">
    <property type="pathway name" value="SIRT1 negatively regulates rRNA expression"/>
</dbReference>
<dbReference type="Reactome" id="R-RNO-427413">
    <property type="pathway name" value="NoRC negatively regulates rRNA expression"/>
</dbReference>
<dbReference type="Reactome" id="R-RNO-5250924">
    <property type="pathway name" value="B-WICH complex positively regulates rRNA expression"/>
</dbReference>
<dbReference type="Reactome" id="R-RNO-5578749">
    <property type="pathway name" value="Transcriptional regulation by small RNAs"/>
</dbReference>
<dbReference type="Reactome" id="R-RNO-5625886">
    <property type="pathway name" value="Activated PKN1 stimulates transcription of AR (androgen receptor) regulated genes KLK2 and KLK3"/>
</dbReference>
<dbReference type="Reactome" id="R-RNO-68616">
    <property type="pathway name" value="Assembly of the ORC complex at the origin of replication"/>
</dbReference>
<dbReference type="Reactome" id="R-RNO-73728">
    <property type="pathway name" value="RNA Polymerase I Promoter Opening"/>
</dbReference>
<dbReference type="Reactome" id="R-RNO-73772">
    <property type="pathway name" value="RNA Polymerase I Promoter Escape"/>
</dbReference>
<dbReference type="Reactome" id="R-RNO-8936459">
    <property type="pathway name" value="RUNX1 regulates genes involved in megakaryocyte differentiation and platelet function"/>
</dbReference>
<dbReference type="Reactome" id="R-RNO-9018519">
    <property type="pathway name" value="Estrogen-dependent gene expression"/>
</dbReference>
<dbReference type="Reactome" id="R-RNO-983231">
    <property type="pathway name" value="Factors involved in megakaryocyte development and platelet production"/>
</dbReference>
<dbReference type="Reactome" id="R-RNO-9841922">
    <property type="pathway name" value="MLL4 and MLL3 complexes regulate expression of PPARG target genes in adipogenesis and hepatic steatosis"/>
</dbReference>
<dbReference type="Reactome" id="R-RNO-9843940">
    <property type="pathway name" value="Regulation of endogenous retroelements by KRAB-ZFP proteins"/>
</dbReference>
<dbReference type="Reactome" id="R-RNO-9843970">
    <property type="pathway name" value="Regulation of endogenous retroelements by the Human Silencing Hub (HUSH) complex"/>
</dbReference>
<dbReference type="CD-CODE" id="246D7041">
    <property type="entry name" value="Chromatoid body"/>
</dbReference>
<dbReference type="PRO" id="PR:Q6LED0"/>
<dbReference type="Proteomes" id="UP000002494">
    <property type="component" value="Chromosome 17"/>
</dbReference>
<dbReference type="Bgee" id="ENSRNOG00000046144">
    <property type="expression patterns" value="Expressed in testis and 9 other cell types or tissues"/>
</dbReference>
<dbReference type="GO" id="GO:0005654">
    <property type="term" value="C:nucleoplasm"/>
    <property type="evidence" value="ECO:0000304"/>
    <property type="project" value="Reactome"/>
</dbReference>
<dbReference type="GO" id="GO:0000786">
    <property type="term" value="C:nucleosome"/>
    <property type="evidence" value="ECO:0007669"/>
    <property type="project" value="UniProtKB-KW"/>
</dbReference>
<dbReference type="GO" id="GO:0005634">
    <property type="term" value="C:nucleus"/>
    <property type="evidence" value="ECO:0000250"/>
    <property type="project" value="UniProtKB"/>
</dbReference>
<dbReference type="GO" id="GO:0003677">
    <property type="term" value="F:DNA binding"/>
    <property type="evidence" value="ECO:0007669"/>
    <property type="project" value="UniProtKB-KW"/>
</dbReference>
<dbReference type="GO" id="GO:0046982">
    <property type="term" value="F:protein heterodimerization activity"/>
    <property type="evidence" value="ECO:0007669"/>
    <property type="project" value="InterPro"/>
</dbReference>
<dbReference type="GO" id="GO:0030527">
    <property type="term" value="F:structural constituent of chromatin"/>
    <property type="evidence" value="ECO:0007669"/>
    <property type="project" value="InterPro"/>
</dbReference>
<dbReference type="CDD" id="cd22911">
    <property type="entry name" value="HFD_H3"/>
    <property type="match status" value="1"/>
</dbReference>
<dbReference type="FunFam" id="1.10.20.10:FF:000078">
    <property type="entry name" value="Histone H3"/>
    <property type="match status" value="1"/>
</dbReference>
<dbReference type="FunFam" id="1.10.20.10:FF:000044">
    <property type="entry name" value="Histone H3.3"/>
    <property type="match status" value="1"/>
</dbReference>
<dbReference type="Gene3D" id="1.10.20.10">
    <property type="entry name" value="Histone, subunit A"/>
    <property type="match status" value="1"/>
</dbReference>
<dbReference type="InterPro" id="IPR009072">
    <property type="entry name" value="Histone-fold"/>
</dbReference>
<dbReference type="InterPro" id="IPR007125">
    <property type="entry name" value="Histone_H2A/H2B/H3"/>
</dbReference>
<dbReference type="InterPro" id="IPR000164">
    <property type="entry name" value="Histone_H3/CENP-A"/>
</dbReference>
<dbReference type="PANTHER" id="PTHR11426">
    <property type="entry name" value="HISTONE H3"/>
    <property type="match status" value="1"/>
</dbReference>
<dbReference type="Pfam" id="PF00125">
    <property type="entry name" value="Histone"/>
    <property type="match status" value="1"/>
</dbReference>
<dbReference type="PRINTS" id="PR00622">
    <property type="entry name" value="HISTONEH3"/>
</dbReference>
<dbReference type="SMART" id="SM00428">
    <property type="entry name" value="H3"/>
    <property type="match status" value="1"/>
</dbReference>
<dbReference type="SUPFAM" id="SSF47113">
    <property type="entry name" value="Histone-fold"/>
    <property type="match status" value="1"/>
</dbReference>
<dbReference type="PROSITE" id="PS00322">
    <property type="entry name" value="HISTONE_H3_1"/>
    <property type="match status" value="1"/>
</dbReference>
<dbReference type="PROSITE" id="PS00959">
    <property type="entry name" value="HISTONE_H3_2"/>
    <property type="match status" value="1"/>
</dbReference>
<name>H31_RAT</name>
<proteinExistence type="evidence at protein level"/>
<accession>Q6LED0</accession>
<feature type="initiator methionine" description="Removed" evidence="2">
    <location>
        <position position="1"/>
    </location>
</feature>
<feature type="chain" id="PRO_0000253949" description="Histone H3.1">
    <location>
        <begin position="2"/>
        <end position="136"/>
    </location>
</feature>
<feature type="region of interest" description="Disordered" evidence="7">
    <location>
        <begin position="1"/>
        <end position="43"/>
    </location>
</feature>
<feature type="modified residue" description="Asymmetric dimethylarginine; by PRMT6; alternate" evidence="2">
    <location>
        <position position="3"/>
    </location>
</feature>
<feature type="modified residue" description="Citrulline; alternate" evidence="2">
    <location>
        <position position="3"/>
    </location>
</feature>
<feature type="modified residue" description="Phosphothreonine; by HASPIN and VRK1" evidence="2">
    <location>
        <position position="4"/>
    </location>
</feature>
<feature type="modified residue" description="Allysine; alternate" evidence="2">
    <location>
        <position position="5"/>
    </location>
</feature>
<feature type="modified residue" description="N6,N6,N6-trimethyllysine; alternate" evidence="2">
    <location>
        <position position="5"/>
    </location>
</feature>
<feature type="modified residue" description="N6,N6-dimethyllysine; alternate" evidence="2">
    <location>
        <position position="5"/>
    </location>
</feature>
<feature type="modified residue" description="N6-(2-hydroxyisobutyryl)lysine; alternate" evidence="2">
    <location>
        <position position="5"/>
    </location>
</feature>
<feature type="modified residue" description="N6-(beta-hydroxybutyryl)lysine; alternate" evidence="4">
    <location>
        <position position="5"/>
    </location>
</feature>
<feature type="modified residue" description="N6-acetyllysine; alternate" evidence="2">
    <location>
        <position position="5"/>
    </location>
</feature>
<feature type="modified residue" description="N6-crotonyllysine; alternate" evidence="2">
    <location>
        <position position="5"/>
    </location>
</feature>
<feature type="modified residue" description="N6-methyllysine; alternate" evidence="2">
    <location>
        <position position="5"/>
    </location>
</feature>
<feature type="modified residue" description="5-glutamyl dopamine; alternate" evidence="9">
    <location>
        <position position="6"/>
    </location>
</feature>
<feature type="modified residue" description="5-glutamyl serotonin; alternate" evidence="2">
    <location>
        <position position="6"/>
    </location>
</feature>
<feature type="modified residue" description="Phosphothreonine; by PKC" evidence="2">
    <location>
        <position position="7"/>
    </location>
</feature>
<feature type="modified residue" description="Citrulline; alternate" evidence="2">
    <location>
        <position position="9"/>
    </location>
</feature>
<feature type="modified residue" description="Symmetric dimethylarginine; by PRMT5; alternate" evidence="4">
    <location>
        <position position="9"/>
    </location>
</feature>
<feature type="modified residue" description="N6,N6,N6-trimethyllysine; alternate" evidence="3">
    <location>
        <position position="10"/>
    </location>
</feature>
<feature type="modified residue" description="N6,N6-dimethyllysine; alternate" evidence="3">
    <location>
        <position position="10"/>
    </location>
</feature>
<feature type="modified residue" description="N6-(2-hydroxyisobutyryl)lysine; alternate" evidence="2">
    <location>
        <position position="10"/>
    </location>
</feature>
<feature type="modified residue" description="N6-(beta-hydroxybutyryl)lysine; alternate" evidence="4">
    <location>
        <position position="10"/>
    </location>
</feature>
<feature type="modified residue" description="N6-acetyllysine; alternate" evidence="2">
    <location>
        <position position="10"/>
    </location>
</feature>
<feature type="modified residue" description="N6-crotonyllysine; alternate" evidence="2">
    <location>
        <position position="10"/>
    </location>
</feature>
<feature type="modified residue" description="N6-lactoyllysine; alternate" evidence="2">
    <location>
        <position position="10"/>
    </location>
</feature>
<feature type="modified residue" description="N6-methyllysine; alternate" evidence="3">
    <location>
        <position position="10"/>
    </location>
</feature>
<feature type="modified residue" description="ADP-ribosylserine; alternate" evidence="2">
    <location>
        <position position="11"/>
    </location>
</feature>
<feature type="modified residue" description="Phosphoserine; alternate; by AURKB, AURKC, RPS6KA3, RPS6KA4 and RPS6KA5" evidence="8">
    <location>
        <position position="11"/>
    </location>
</feature>
<feature type="modified residue" description="Phosphothreonine; by PKC and CHEK1" evidence="8">
    <location>
        <position position="12"/>
    </location>
</feature>
<feature type="modified residue" description="N6-(2-hydroxyisobutyryl)lysine; alternate" evidence="2">
    <location>
        <position position="15"/>
    </location>
</feature>
<feature type="modified residue" description="N6-(beta-hydroxybutyryl)lysine; alternate" evidence="4">
    <location>
        <position position="15"/>
    </location>
</feature>
<feature type="modified residue" description="N6-acetyllysine; alternate" evidence="3">
    <location>
        <position position="15"/>
    </location>
</feature>
<feature type="modified residue" description="N6-glutaryllysine; alternate" evidence="2">
    <location>
        <position position="15"/>
    </location>
</feature>
<feature type="modified residue" description="N6-lactoyllysine; alternate" evidence="4">
    <location>
        <position position="15"/>
    </location>
</feature>
<feature type="modified residue" description="N6-succinyllysine; alternate" evidence="2">
    <location>
        <position position="15"/>
    </location>
</feature>
<feature type="modified residue" description="Asymmetric dimethylarginine; by CARM1; alternate" evidence="2">
    <location>
        <position position="18"/>
    </location>
</feature>
<feature type="modified residue" description="Citrulline; alternate" evidence="2">
    <location>
        <position position="18"/>
    </location>
</feature>
<feature type="modified residue" description="N6-(2-hydroxyisobutyryl)lysine; alternate" evidence="2">
    <location>
        <position position="19"/>
    </location>
</feature>
<feature type="modified residue" description="N6-(beta-hydroxybutyryl)lysine; alternate" evidence="4">
    <location>
        <position position="19"/>
    </location>
</feature>
<feature type="modified residue" description="N6-acetyllysine; alternate" evidence="2">
    <location>
        <position position="19"/>
    </location>
</feature>
<feature type="modified residue" description="N6-butyryllysine; alternate" evidence="4">
    <location>
        <position position="19"/>
    </location>
</feature>
<feature type="modified residue" description="N6-crotonyllysine; alternate" evidence="2">
    <location>
        <position position="19"/>
    </location>
</feature>
<feature type="modified residue" description="N6-glutaryllysine; alternate" evidence="2">
    <location>
        <position position="19"/>
    </location>
</feature>
<feature type="modified residue" description="N6-lactoyllysine; alternate" evidence="2">
    <location>
        <position position="19"/>
    </location>
</feature>
<feature type="modified residue" description="N6-methyllysine; alternate" evidence="2">
    <location>
        <position position="19"/>
    </location>
</feature>
<feature type="modified residue" description="N6-(2-hydroxyisobutyryl)lysine; alternate" evidence="2">
    <location>
        <position position="24"/>
    </location>
</feature>
<feature type="modified residue" description="N6-(beta-hydroxybutyryl)lysine; alternate" evidence="4">
    <location>
        <position position="24"/>
    </location>
</feature>
<feature type="modified residue" description="N6-acetyllysine; alternate" evidence="3">
    <location>
        <position position="24"/>
    </location>
</feature>
<feature type="modified residue" description="N6-butyryllysine; alternate" evidence="4">
    <location>
        <position position="24"/>
    </location>
</feature>
<feature type="modified residue" description="N6-crotonyllysine; alternate" evidence="2">
    <location>
        <position position="24"/>
    </location>
</feature>
<feature type="modified residue" description="N6-glutaryllysine; alternate" evidence="2">
    <location>
        <position position="24"/>
    </location>
</feature>
<feature type="modified residue" description="N6-lactoyllysine; alternate" evidence="2">
    <location>
        <position position="24"/>
    </location>
</feature>
<feature type="modified residue" description="N6-methyllysine; alternate" evidence="2">
    <location>
        <position position="24"/>
    </location>
</feature>
<feature type="modified residue" description="Citrulline" evidence="2">
    <location>
        <position position="27"/>
    </location>
</feature>
<feature type="modified residue" description="N6,N6,N6-trimethyllysine; alternate" evidence="3">
    <location>
        <position position="28"/>
    </location>
</feature>
<feature type="modified residue" description="N6,N6-dimethyllysine; alternate" evidence="3">
    <location>
        <position position="28"/>
    </location>
</feature>
<feature type="modified residue" description="N6-(2-hydroxyisobutyryl)lysine; alternate" evidence="2">
    <location>
        <position position="28"/>
    </location>
</feature>
<feature type="modified residue" description="N6-acetyllysine; alternate" evidence="2">
    <location>
        <position position="28"/>
    </location>
</feature>
<feature type="modified residue" description="N6-crotonyllysine; alternate" evidence="2">
    <location>
        <position position="28"/>
    </location>
</feature>
<feature type="modified residue" description="N6-glutaryllysine; alternate" evidence="2">
    <location>
        <position position="28"/>
    </location>
</feature>
<feature type="modified residue" description="N6-lactoyllysine; alternate" evidence="2">
    <location>
        <position position="28"/>
    </location>
</feature>
<feature type="modified residue" description="N6-methyllysine; alternate" evidence="3">
    <location>
        <position position="28"/>
    </location>
</feature>
<feature type="modified residue" description="ADP-ribosylserine; alternate" evidence="2">
    <location>
        <position position="29"/>
    </location>
</feature>
<feature type="modified residue" description="Phosphoserine; alternate; by AURKB, AURKC and RPS6KA5" evidence="3">
    <location>
        <position position="29"/>
    </location>
</feature>
<feature type="modified residue" description="N6,N6,N6-trimethyllysine; alternate" evidence="2 11">
    <location>
        <position position="37"/>
    </location>
</feature>
<feature type="modified residue" description="N6,N6-dimethyllysine; alternate" evidence="2">
    <location>
        <position position="37"/>
    </location>
</feature>
<feature type="modified residue" description="N6-(2-hydroxyisobutyryl)lysine; alternate" evidence="2">
    <location>
        <position position="37"/>
    </location>
</feature>
<feature type="modified residue" description="N6-acetyllysine; alternate" evidence="2">
    <location>
        <position position="37"/>
    </location>
</feature>
<feature type="modified residue" description="N6-methyllysine; alternate" evidence="2">
    <location>
        <position position="37"/>
    </location>
</feature>
<feature type="modified residue" description="N6-methyllysine" evidence="2">
    <location>
        <position position="38"/>
    </location>
</feature>
<feature type="modified residue" description="Phosphotyrosine" evidence="2">
    <location>
        <position position="42"/>
    </location>
</feature>
<feature type="modified residue" description="N6,N6,N6-trimethyllysine; alternate" evidence="2">
    <location>
        <position position="57"/>
    </location>
</feature>
<feature type="modified residue" description="N6-(2-hydroxyisobutyryl)lysine; alternate" evidence="2">
    <location>
        <position position="57"/>
    </location>
</feature>
<feature type="modified residue" description="N6-(beta-hydroxybutyryl)lysine; alternate" evidence="4">
    <location>
        <position position="57"/>
    </location>
</feature>
<feature type="modified residue" description="N6-acetyllysine; alternate" evidence="2">
    <location>
        <position position="57"/>
    </location>
</feature>
<feature type="modified residue" description="N6-crotonyllysine; alternate" evidence="2">
    <location>
        <position position="57"/>
    </location>
</feature>
<feature type="modified residue" description="N6-glutaryllysine; alternate" evidence="2">
    <location>
        <position position="57"/>
    </location>
</feature>
<feature type="modified residue" description="N6-lactoyllysine; alternate" evidence="4">
    <location>
        <position position="57"/>
    </location>
</feature>
<feature type="modified residue" description="N6-methyllysine; by EHMT2; alternate" evidence="2">
    <location>
        <position position="57"/>
    </location>
</feature>
<feature type="modified residue" description="N6-succinyllysine; alternate" evidence="2">
    <location>
        <position position="57"/>
    </location>
</feature>
<feature type="modified residue" description="Phosphoserine" evidence="2">
    <location>
        <position position="58"/>
    </location>
</feature>
<feature type="modified residue" description="N6-(2-hydroxyisobutyryl)lysine; alternate" evidence="2">
    <location>
        <position position="65"/>
    </location>
</feature>
<feature type="modified residue" description="N6-methyllysine; alternate" evidence="2">
    <location>
        <position position="65"/>
    </location>
</feature>
<feature type="modified residue" description="N6,N6,N6-trimethyllysine; alternate" evidence="4">
    <location>
        <position position="80"/>
    </location>
</feature>
<feature type="modified residue" description="N6,N6-dimethyllysine; alternate" evidence="2">
    <location>
        <position position="80"/>
    </location>
</feature>
<feature type="modified residue" description="N6-(2-hydroxyisobutyryl)lysine; alternate" evidence="2">
    <location>
        <position position="80"/>
    </location>
</feature>
<feature type="modified residue" description="N6-acetyllysine; alternate" evidence="2">
    <location>
        <position position="80"/>
    </location>
</feature>
<feature type="modified residue" description="N6-glutaryllysine; alternate" evidence="2">
    <location>
        <position position="80"/>
    </location>
</feature>
<feature type="modified residue" description="N6-lactoyllysine; alternate" evidence="2">
    <location>
        <position position="80"/>
    </location>
</feature>
<feature type="modified residue" description="N6-methyllysine; alternate" evidence="2">
    <location>
        <position position="80"/>
    </location>
</feature>
<feature type="modified residue" description="N6-succinyllysine; alternate" evidence="2">
    <location>
        <position position="80"/>
    </location>
</feature>
<feature type="modified residue" description="Phosphothreonine" evidence="2">
    <location>
        <position position="81"/>
    </location>
</feature>
<feature type="modified residue" description="Phosphoserine" evidence="5">
    <location>
        <position position="87"/>
    </location>
</feature>
<feature type="modified residue" description="Phosphothreonine" evidence="6">
    <location>
        <position position="108"/>
    </location>
</feature>
<feature type="modified residue" description="N6-acetyllysine; alternate" evidence="2">
    <location>
        <position position="116"/>
    </location>
</feature>
<feature type="modified residue" description="N6-glutaryllysine; alternate" evidence="2">
    <location>
        <position position="116"/>
    </location>
</feature>
<feature type="modified residue" description="N6-(2-hydroxyisobutyryl)lysine; alternate" evidence="2">
    <location>
        <position position="123"/>
    </location>
</feature>
<feature type="modified residue" description="N6-acetyllysine; alternate" evidence="2">
    <location>
        <position position="123"/>
    </location>
</feature>
<feature type="modified residue" description="N6-glutaryllysine; alternate" evidence="2">
    <location>
        <position position="123"/>
    </location>
</feature>
<feature type="modified residue" description="N6-methyllysine; alternate" evidence="2">
    <location>
        <position position="123"/>
    </location>
</feature>
<feature type="modified residue" description="N6-succinyllysine; alternate" evidence="2">
    <location>
        <position position="123"/>
    </location>
</feature>
<feature type="lipid moiety-binding region" description="N6-decanoyllysine" evidence="2">
    <location>
        <position position="19"/>
    </location>
</feature>
<reference key="1">
    <citation type="journal article" date="1994" name="Mamm. Genome">
        <title>A B2-L1 composite between rat histone H2A and H3 genes.</title>
        <authorList>
            <person name="Choi Y.C."/>
            <person name="Han B.D."/>
            <person name="Chae C.-B."/>
        </authorList>
    </citation>
    <scope>NUCLEOTIDE SEQUENCE [GENOMIC DNA]</scope>
    <source>
        <strain>Sprague-Dawley</strain>
        <tissue>Liver</tissue>
    </source>
</reference>
<reference key="2">
    <citation type="submission" date="2007-09" db="UniProtKB">
        <authorList>
            <person name="Lubec G."/>
            <person name="Kang S.U."/>
            <person name="Lubec S."/>
        </authorList>
    </citation>
    <scope>PROTEIN SEQUENCE OF 58-64</scope>
    <scope>IDENTIFICATION BY MASS SPECTROMETRY</scope>
    <source>
        <strain>Sprague-Dawley</strain>
        <tissue>Brain</tissue>
    </source>
</reference>
<reference key="3">
    <citation type="journal article" date="1998" name="J. Biol. Chem.">
        <title>Ubiquitination of histone H3 in elongating spermatids of rat testes.</title>
        <authorList>
            <person name="Chen H.Y."/>
            <person name="Sun J.-M."/>
            <person name="Zhang Y."/>
            <person name="Davie J.R."/>
            <person name="Meistrich M.L."/>
        </authorList>
    </citation>
    <scope>UBIQUITINATION</scope>
</reference>
<reference key="4">
    <citation type="journal article" date="2003" name="Nucleic Acids Res.">
        <title>Novel mitosis-specific phosphorylation of histone H3 at Thr11 mediated by Dlk/ZIP kinase.</title>
        <authorList>
            <person name="Preuss U."/>
            <person name="Landsberg G."/>
            <person name="Scheidtmann K.H."/>
        </authorList>
    </citation>
    <scope>PHOSPHORYLATION AT SER-11 AND THR-12</scope>
</reference>
<reference key="5">
    <citation type="journal article" date="2020" name="Science">
        <title>Dopaminylation of histone H3 in ventral tegmental area regulates cocaine seeking.</title>
        <authorList>
            <person name="Lepack A.E."/>
            <person name="Werner C.T."/>
            <person name="Stewart A.F."/>
            <person name="Fulton S.L."/>
            <person name="Zhong P."/>
            <person name="Farrelly L.A."/>
            <person name="Smith A.C.W."/>
            <person name="Ramakrishnan A."/>
            <person name="Lyu Y."/>
            <person name="Bastle R.M."/>
            <person name="Martin J.A."/>
            <person name="Mitra S."/>
            <person name="O'Connor R.M."/>
            <person name="Wang Z.J."/>
            <person name="Molina H."/>
            <person name="Turecki G."/>
            <person name="Shen L."/>
            <person name="Yan Z."/>
            <person name="Calipari E.S."/>
            <person name="Dietz D.M."/>
            <person name="Kenny P.J."/>
            <person name="Maze I."/>
        </authorList>
    </citation>
    <scope>DOPAMINYLATION AT GLN-6</scope>
</reference>